<comment type="function">
    <text evidence="3">GTPase which can activate the MEK/ERK pathway and induce cell transformation when overexpressed. May act as a nuclear scaffold for MAPK1, probably by association with MAPK1 nuclear export signal leading to enhanced ERK1/ERK2 signaling.</text>
</comment>
<comment type="subunit">
    <text evidence="3">Interacts directly with MAPK1 (wild-type and kinase-deficient forms). Interacts directly (in GTP-bound form) with MAP2K1 (wild-type and kinase-deficient forms).</text>
</comment>
<comment type="interaction">
    <interactant intactId="EBI-9548773">
        <id>Q8CFP6</id>
    </interactant>
    <interactant intactId="EBI-298860">
        <id>P31938</id>
        <label>Map2k1</label>
    </interactant>
    <organismsDiffer>false</organismsDiffer>
    <experiments>3</experiments>
</comment>
<comment type="subcellular location">
    <subcellularLocation>
        <location evidence="3">Nucleus</location>
    </subcellularLocation>
</comment>
<comment type="similarity">
    <text evidence="4">Belongs to the small GTPase superfamily. Rab family.</text>
</comment>
<organism>
    <name type="scientific">Mus musculus</name>
    <name type="common">Mouse</name>
    <dbReference type="NCBI Taxonomy" id="10090"/>
    <lineage>
        <taxon>Eukaryota</taxon>
        <taxon>Metazoa</taxon>
        <taxon>Chordata</taxon>
        <taxon>Craniata</taxon>
        <taxon>Vertebrata</taxon>
        <taxon>Euteleostomi</taxon>
        <taxon>Mammalia</taxon>
        <taxon>Eutheria</taxon>
        <taxon>Euarchontoglires</taxon>
        <taxon>Glires</taxon>
        <taxon>Rodentia</taxon>
        <taxon>Myomorpha</taxon>
        <taxon>Muroidea</taxon>
        <taxon>Muridae</taxon>
        <taxon>Murinae</taxon>
        <taxon>Mus</taxon>
        <taxon>Mus</taxon>
    </lineage>
</organism>
<accession>Q8CFP6</accession>
<accession>Q8BX00</accession>
<accession>Q923I0</accession>
<protein>
    <recommendedName>
        <fullName>DnaJ homolog subfamily C member 27</fullName>
    </recommendedName>
    <alternativeName>
        <fullName>Rab and DnaJ domain-containing protein</fullName>
    </alternativeName>
</protein>
<name>DJC27_MOUSE</name>
<proteinExistence type="evidence at protein level"/>
<feature type="chain" id="PRO_0000332976" description="DnaJ homolog subfamily C member 27">
    <location>
        <begin position="1"/>
        <end position="273"/>
    </location>
</feature>
<feature type="domain" description="J" evidence="2">
    <location>
        <begin position="217"/>
        <end position="273"/>
    </location>
</feature>
<feature type="region of interest" description="Required for interaction with MAPK1" evidence="3">
    <location>
        <begin position="1"/>
        <end position="18"/>
    </location>
</feature>
<feature type="binding site" evidence="1">
    <location>
        <begin position="23"/>
        <end position="30"/>
    </location>
    <ligand>
        <name>GTP</name>
        <dbReference type="ChEBI" id="CHEBI:37565"/>
    </ligand>
</feature>
<feature type="binding site" evidence="1">
    <location>
        <begin position="71"/>
        <end position="75"/>
    </location>
    <ligand>
        <name>GTP</name>
        <dbReference type="ChEBI" id="CHEBI:37565"/>
    </ligand>
</feature>
<feature type="binding site" evidence="1">
    <location>
        <begin position="134"/>
        <end position="137"/>
    </location>
    <ligand>
        <name>GTP</name>
        <dbReference type="ChEBI" id="CHEBI:37565"/>
    </ligand>
</feature>
<feature type="mutagenesis site" description="Abolishes GTP binding." evidence="3">
    <original>S</original>
    <variation>N</variation>
    <location>
        <position position="30"/>
    </location>
</feature>
<feature type="mutagenesis site" description="Abolishes GTPase activity." evidence="3">
    <original>H</original>
    <variation>L</variation>
    <location>
        <position position="75"/>
    </location>
</feature>
<feature type="mutagenesis site" description="Increases GTPase activity." evidence="3">
    <original>H</original>
    <variation>Q</variation>
    <location>
        <position position="75"/>
    </location>
</feature>
<feature type="sequence conflict" description="In Ref. 1; AAK62027." evidence="4" ref="1">
    <original>TNV</original>
    <variation>AYM</variation>
    <location>
        <begin position="3"/>
        <end position="5"/>
    </location>
</feature>
<feature type="sequence conflict" description="In Ref. 1; AAK62027." evidence="4" ref="1">
    <original>K</original>
    <variation>E</variation>
    <location>
        <position position="34"/>
    </location>
</feature>
<feature type="sequence conflict" description="In Ref. 1; AAK62027." evidence="4" ref="1">
    <original>S</original>
    <variation>F</variation>
    <location>
        <position position="43"/>
    </location>
</feature>
<feature type="sequence conflict" description="In Ref. 1; AAK62027." evidence="4" ref="1">
    <original>K</original>
    <variation>E</variation>
    <location>
        <position position="57"/>
    </location>
</feature>
<feature type="sequence conflict" description="In Ref. 2; BAC33667." evidence="4" ref="2">
    <original>T</original>
    <variation>A</variation>
    <location>
        <position position="208"/>
    </location>
</feature>
<feature type="sequence conflict" description="In Ref. 1; AAK62027." evidence="4" ref="1">
    <original>K</original>
    <variation>KW</variation>
    <location>
        <position position="273"/>
    </location>
</feature>
<evidence type="ECO:0000250" key="1"/>
<evidence type="ECO:0000255" key="2">
    <source>
        <dbReference type="PROSITE-ProRule" id="PRU00286"/>
    </source>
</evidence>
<evidence type="ECO:0000269" key="3">
    <source>
    </source>
</evidence>
<evidence type="ECO:0000305" key="4"/>
<gene>
    <name type="primary">Dnajc27</name>
    <name type="synonym">Rabj</name>
    <name type="synonym">Rbj</name>
</gene>
<sequence>METNVPKRKEPAKSLRIKVISMGNAEVGKSCIIKRYCEKRFVSKYLATIGIDYGVTKVQVRDREIKVNIFDMAGHPFFFEVRNEFYKDTQGVILVYDVGQKDSFDALDSWLAEMKQELGPHGNMDNIVFVVCANKIDCSKHRCIDESEGRLWAESKGFLYFETSAQTGEGINEMFQTFYLSIVDLCENGGKRPTASSSASFTKEQADTIRRIRNSKDSWEMLGVRPGASREEVNKAYRKLAVLLHPDKCVAPGSEDAFKAVVNARTALLKNIK</sequence>
<dbReference type="EMBL" id="AY035893">
    <property type="protein sequence ID" value="AAK62027.1"/>
    <property type="molecule type" value="mRNA"/>
</dbReference>
<dbReference type="EMBL" id="AK049300">
    <property type="protein sequence ID" value="BAC33667.1"/>
    <property type="molecule type" value="mRNA"/>
</dbReference>
<dbReference type="EMBL" id="BC042643">
    <property type="protein sequence ID" value="AAH42643.1"/>
    <property type="molecule type" value="mRNA"/>
</dbReference>
<dbReference type="EMBL" id="BC051140">
    <property type="protein sequence ID" value="AAH51140.1"/>
    <property type="molecule type" value="mRNA"/>
</dbReference>
<dbReference type="EMBL" id="BK001285">
    <property type="protein sequence ID" value="DAA01324.1"/>
    <property type="molecule type" value="mRNA"/>
</dbReference>
<dbReference type="CCDS" id="CCDS25786.1"/>
<dbReference type="RefSeq" id="NP_694722.2">
    <property type="nucleotide sequence ID" value="NM_153082.4"/>
</dbReference>
<dbReference type="SMR" id="Q8CFP6"/>
<dbReference type="FunCoup" id="Q8CFP6">
    <property type="interactions" value="3385"/>
</dbReference>
<dbReference type="IntAct" id="Q8CFP6">
    <property type="interactions" value="2"/>
</dbReference>
<dbReference type="STRING" id="10090.ENSMUSP00000020986"/>
<dbReference type="iPTMnet" id="Q8CFP6"/>
<dbReference type="PhosphoSitePlus" id="Q8CFP6"/>
<dbReference type="PaxDb" id="10090-ENSMUSP00000020986"/>
<dbReference type="PeptideAtlas" id="Q8CFP6"/>
<dbReference type="ProteomicsDB" id="279673"/>
<dbReference type="Antibodypedia" id="27605">
    <property type="antibodies" value="158 antibodies from 21 providers"/>
</dbReference>
<dbReference type="DNASU" id="217378"/>
<dbReference type="Ensembl" id="ENSMUST00000020986.15">
    <property type="protein sequence ID" value="ENSMUSP00000020986.8"/>
    <property type="gene ID" value="ENSMUSG00000020657.17"/>
</dbReference>
<dbReference type="Ensembl" id="ENSMUST00000049584.6">
    <property type="protein sequence ID" value="ENSMUSP00000106803.3"/>
    <property type="gene ID" value="ENSMUSG00000020657.17"/>
</dbReference>
<dbReference type="Ensembl" id="ENSMUST00000219923.2">
    <property type="protein sequence ID" value="ENSMUSP00000151848.2"/>
    <property type="gene ID" value="ENSMUSG00000020657.17"/>
</dbReference>
<dbReference type="GeneID" id="217378"/>
<dbReference type="KEGG" id="mmu:217378"/>
<dbReference type="UCSC" id="uc007mxi.2">
    <property type="organism name" value="mouse"/>
</dbReference>
<dbReference type="AGR" id="MGI:2443036"/>
<dbReference type="CTD" id="51277"/>
<dbReference type="MGI" id="MGI:2443036">
    <property type="gene designation" value="Dnajc27"/>
</dbReference>
<dbReference type="VEuPathDB" id="HostDB:ENSMUSG00000020657"/>
<dbReference type="eggNOG" id="KOG0098">
    <property type="taxonomic scope" value="Eukaryota"/>
</dbReference>
<dbReference type="GeneTree" id="ENSGT00940000157133"/>
<dbReference type="HOGENOM" id="CLU_041217_16_0_1"/>
<dbReference type="InParanoid" id="Q8CFP6"/>
<dbReference type="OMA" id="NMENVVF"/>
<dbReference type="OrthoDB" id="8830751at2759"/>
<dbReference type="PhylomeDB" id="Q8CFP6"/>
<dbReference type="TreeFam" id="TF328564"/>
<dbReference type="BioGRID-ORCS" id="217378">
    <property type="hits" value="3 hits in 79 CRISPR screens"/>
</dbReference>
<dbReference type="ChiTaRS" id="Dnajc27">
    <property type="organism name" value="mouse"/>
</dbReference>
<dbReference type="PRO" id="PR:Q8CFP6"/>
<dbReference type="Proteomes" id="UP000000589">
    <property type="component" value="Chromosome 12"/>
</dbReference>
<dbReference type="RNAct" id="Q8CFP6">
    <property type="molecule type" value="protein"/>
</dbReference>
<dbReference type="Bgee" id="ENSMUSG00000020657">
    <property type="expression patterns" value="Expressed in spermatocyte and 186 other cell types or tissues"/>
</dbReference>
<dbReference type="GO" id="GO:0005739">
    <property type="term" value="C:mitochondrion"/>
    <property type="evidence" value="ECO:0007005"/>
    <property type="project" value="MGI"/>
</dbReference>
<dbReference type="GO" id="GO:0005634">
    <property type="term" value="C:nucleus"/>
    <property type="evidence" value="ECO:0000314"/>
    <property type="project" value="UniProtKB"/>
</dbReference>
<dbReference type="GO" id="GO:0005525">
    <property type="term" value="F:GTP binding"/>
    <property type="evidence" value="ECO:0007669"/>
    <property type="project" value="UniProtKB-KW"/>
</dbReference>
<dbReference type="GO" id="GO:0003924">
    <property type="term" value="F:GTPase activity"/>
    <property type="evidence" value="ECO:0000314"/>
    <property type="project" value="UniProtKB"/>
</dbReference>
<dbReference type="GO" id="GO:0070374">
    <property type="term" value="P:positive regulation of ERK1 and ERK2 cascade"/>
    <property type="evidence" value="ECO:0000314"/>
    <property type="project" value="UniProtKB"/>
</dbReference>
<dbReference type="CDD" id="cd06257">
    <property type="entry name" value="DnaJ"/>
    <property type="match status" value="1"/>
</dbReference>
<dbReference type="CDD" id="cd04119">
    <property type="entry name" value="RJL"/>
    <property type="match status" value="1"/>
</dbReference>
<dbReference type="FunFam" id="3.40.50.300:FF:000697">
    <property type="entry name" value="DnaJ homolog subfamily C member 27"/>
    <property type="match status" value="1"/>
</dbReference>
<dbReference type="FunFam" id="1.10.287.110:FF:000019">
    <property type="entry name" value="dnaJ homolog subfamily C member 27"/>
    <property type="match status" value="1"/>
</dbReference>
<dbReference type="Gene3D" id="1.10.287.110">
    <property type="entry name" value="DnaJ domain"/>
    <property type="match status" value="1"/>
</dbReference>
<dbReference type="Gene3D" id="3.40.50.300">
    <property type="entry name" value="P-loop containing nucleotide triphosphate hydrolases"/>
    <property type="match status" value="1"/>
</dbReference>
<dbReference type="InterPro" id="IPR001623">
    <property type="entry name" value="DnaJ_domain"/>
</dbReference>
<dbReference type="InterPro" id="IPR036869">
    <property type="entry name" value="J_dom_sf"/>
</dbReference>
<dbReference type="InterPro" id="IPR027417">
    <property type="entry name" value="P-loop_NTPase"/>
</dbReference>
<dbReference type="InterPro" id="IPR005225">
    <property type="entry name" value="Small_GTP-bd"/>
</dbReference>
<dbReference type="InterPro" id="IPR001806">
    <property type="entry name" value="Small_GTPase"/>
</dbReference>
<dbReference type="NCBIfam" id="TIGR00231">
    <property type="entry name" value="small_GTP"/>
    <property type="match status" value="1"/>
</dbReference>
<dbReference type="PANTHER" id="PTHR47981">
    <property type="entry name" value="RAB FAMILY"/>
    <property type="match status" value="1"/>
</dbReference>
<dbReference type="PANTHER" id="PTHR47981:SF20">
    <property type="entry name" value="RAS-RELATED PROTEIN RAB-7A"/>
    <property type="match status" value="1"/>
</dbReference>
<dbReference type="Pfam" id="PF00226">
    <property type="entry name" value="DnaJ"/>
    <property type="match status" value="1"/>
</dbReference>
<dbReference type="Pfam" id="PF00071">
    <property type="entry name" value="Ras"/>
    <property type="match status" value="1"/>
</dbReference>
<dbReference type="PRINTS" id="PR00625">
    <property type="entry name" value="JDOMAIN"/>
</dbReference>
<dbReference type="PRINTS" id="PR00449">
    <property type="entry name" value="RASTRNSFRMNG"/>
</dbReference>
<dbReference type="SMART" id="SM00271">
    <property type="entry name" value="DnaJ"/>
    <property type="match status" value="1"/>
</dbReference>
<dbReference type="SMART" id="SM00175">
    <property type="entry name" value="RAB"/>
    <property type="match status" value="1"/>
</dbReference>
<dbReference type="SMART" id="SM00176">
    <property type="entry name" value="RAN"/>
    <property type="match status" value="1"/>
</dbReference>
<dbReference type="SMART" id="SM00173">
    <property type="entry name" value="RAS"/>
    <property type="match status" value="1"/>
</dbReference>
<dbReference type="SMART" id="SM00174">
    <property type="entry name" value="RHO"/>
    <property type="match status" value="1"/>
</dbReference>
<dbReference type="SUPFAM" id="SSF46565">
    <property type="entry name" value="Chaperone J-domain"/>
    <property type="match status" value="1"/>
</dbReference>
<dbReference type="SUPFAM" id="SSF52540">
    <property type="entry name" value="P-loop containing nucleoside triphosphate hydrolases"/>
    <property type="match status" value="1"/>
</dbReference>
<dbReference type="PROSITE" id="PS50076">
    <property type="entry name" value="DNAJ_2"/>
    <property type="match status" value="1"/>
</dbReference>
<dbReference type="PROSITE" id="PS51419">
    <property type="entry name" value="RAB"/>
    <property type="match status" value="1"/>
</dbReference>
<reference key="1">
    <citation type="submission" date="2001-05" db="EMBL/GenBank/DDBJ databases">
        <title>Novel Rab gene rabJ.</title>
        <authorList>
            <person name="Chen T."/>
            <person name="Zhang W."/>
            <person name="Cao X."/>
        </authorList>
    </citation>
    <scope>NUCLEOTIDE SEQUENCE [MRNA]</scope>
</reference>
<reference key="2">
    <citation type="journal article" date="2005" name="Science">
        <title>The transcriptional landscape of the mammalian genome.</title>
        <authorList>
            <person name="Carninci P."/>
            <person name="Kasukawa T."/>
            <person name="Katayama S."/>
            <person name="Gough J."/>
            <person name="Frith M.C."/>
            <person name="Maeda N."/>
            <person name="Oyama R."/>
            <person name="Ravasi T."/>
            <person name="Lenhard B."/>
            <person name="Wells C."/>
            <person name="Kodzius R."/>
            <person name="Shimokawa K."/>
            <person name="Bajic V.B."/>
            <person name="Brenner S.E."/>
            <person name="Batalov S."/>
            <person name="Forrest A.R."/>
            <person name="Zavolan M."/>
            <person name="Davis M.J."/>
            <person name="Wilming L.G."/>
            <person name="Aidinis V."/>
            <person name="Allen J.E."/>
            <person name="Ambesi-Impiombato A."/>
            <person name="Apweiler R."/>
            <person name="Aturaliya R.N."/>
            <person name="Bailey T.L."/>
            <person name="Bansal M."/>
            <person name="Baxter L."/>
            <person name="Beisel K.W."/>
            <person name="Bersano T."/>
            <person name="Bono H."/>
            <person name="Chalk A.M."/>
            <person name="Chiu K.P."/>
            <person name="Choudhary V."/>
            <person name="Christoffels A."/>
            <person name="Clutterbuck D.R."/>
            <person name="Crowe M.L."/>
            <person name="Dalla E."/>
            <person name="Dalrymple B.P."/>
            <person name="de Bono B."/>
            <person name="Della Gatta G."/>
            <person name="di Bernardo D."/>
            <person name="Down T."/>
            <person name="Engstrom P."/>
            <person name="Fagiolini M."/>
            <person name="Faulkner G."/>
            <person name="Fletcher C.F."/>
            <person name="Fukushima T."/>
            <person name="Furuno M."/>
            <person name="Futaki S."/>
            <person name="Gariboldi M."/>
            <person name="Georgii-Hemming P."/>
            <person name="Gingeras T.R."/>
            <person name="Gojobori T."/>
            <person name="Green R.E."/>
            <person name="Gustincich S."/>
            <person name="Harbers M."/>
            <person name="Hayashi Y."/>
            <person name="Hensch T.K."/>
            <person name="Hirokawa N."/>
            <person name="Hill D."/>
            <person name="Huminiecki L."/>
            <person name="Iacono M."/>
            <person name="Ikeo K."/>
            <person name="Iwama A."/>
            <person name="Ishikawa T."/>
            <person name="Jakt M."/>
            <person name="Kanapin A."/>
            <person name="Katoh M."/>
            <person name="Kawasawa Y."/>
            <person name="Kelso J."/>
            <person name="Kitamura H."/>
            <person name="Kitano H."/>
            <person name="Kollias G."/>
            <person name="Krishnan S.P."/>
            <person name="Kruger A."/>
            <person name="Kummerfeld S.K."/>
            <person name="Kurochkin I.V."/>
            <person name="Lareau L.F."/>
            <person name="Lazarevic D."/>
            <person name="Lipovich L."/>
            <person name="Liu J."/>
            <person name="Liuni S."/>
            <person name="McWilliam S."/>
            <person name="Madan Babu M."/>
            <person name="Madera M."/>
            <person name="Marchionni L."/>
            <person name="Matsuda H."/>
            <person name="Matsuzawa S."/>
            <person name="Miki H."/>
            <person name="Mignone F."/>
            <person name="Miyake S."/>
            <person name="Morris K."/>
            <person name="Mottagui-Tabar S."/>
            <person name="Mulder N."/>
            <person name="Nakano N."/>
            <person name="Nakauchi H."/>
            <person name="Ng P."/>
            <person name="Nilsson R."/>
            <person name="Nishiguchi S."/>
            <person name="Nishikawa S."/>
            <person name="Nori F."/>
            <person name="Ohara O."/>
            <person name="Okazaki Y."/>
            <person name="Orlando V."/>
            <person name="Pang K.C."/>
            <person name="Pavan W.J."/>
            <person name="Pavesi G."/>
            <person name="Pesole G."/>
            <person name="Petrovsky N."/>
            <person name="Piazza S."/>
            <person name="Reed J."/>
            <person name="Reid J.F."/>
            <person name="Ring B.Z."/>
            <person name="Ringwald M."/>
            <person name="Rost B."/>
            <person name="Ruan Y."/>
            <person name="Salzberg S.L."/>
            <person name="Sandelin A."/>
            <person name="Schneider C."/>
            <person name="Schoenbach C."/>
            <person name="Sekiguchi K."/>
            <person name="Semple C.A."/>
            <person name="Seno S."/>
            <person name="Sessa L."/>
            <person name="Sheng Y."/>
            <person name="Shibata Y."/>
            <person name="Shimada H."/>
            <person name="Shimada K."/>
            <person name="Silva D."/>
            <person name="Sinclair B."/>
            <person name="Sperling S."/>
            <person name="Stupka E."/>
            <person name="Sugiura K."/>
            <person name="Sultana R."/>
            <person name="Takenaka Y."/>
            <person name="Taki K."/>
            <person name="Tammoja K."/>
            <person name="Tan S.L."/>
            <person name="Tang S."/>
            <person name="Taylor M.S."/>
            <person name="Tegner J."/>
            <person name="Teichmann S.A."/>
            <person name="Ueda H.R."/>
            <person name="van Nimwegen E."/>
            <person name="Verardo R."/>
            <person name="Wei C.L."/>
            <person name="Yagi K."/>
            <person name="Yamanishi H."/>
            <person name="Zabarovsky E."/>
            <person name="Zhu S."/>
            <person name="Zimmer A."/>
            <person name="Hide W."/>
            <person name="Bult C."/>
            <person name="Grimmond S.M."/>
            <person name="Teasdale R.D."/>
            <person name="Liu E.T."/>
            <person name="Brusic V."/>
            <person name="Quackenbush J."/>
            <person name="Wahlestedt C."/>
            <person name="Mattick J.S."/>
            <person name="Hume D.A."/>
            <person name="Kai C."/>
            <person name="Sasaki D."/>
            <person name="Tomaru Y."/>
            <person name="Fukuda S."/>
            <person name="Kanamori-Katayama M."/>
            <person name="Suzuki M."/>
            <person name="Aoki J."/>
            <person name="Arakawa T."/>
            <person name="Iida J."/>
            <person name="Imamura K."/>
            <person name="Itoh M."/>
            <person name="Kato T."/>
            <person name="Kawaji H."/>
            <person name="Kawagashira N."/>
            <person name="Kawashima T."/>
            <person name="Kojima M."/>
            <person name="Kondo S."/>
            <person name="Konno H."/>
            <person name="Nakano K."/>
            <person name="Ninomiya N."/>
            <person name="Nishio T."/>
            <person name="Okada M."/>
            <person name="Plessy C."/>
            <person name="Shibata K."/>
            <person name="Shiraki T."/>
            <person name="Suzuki S."/>
            <person name="Tagami M."/>
            <person name="Waki K."/>
            <person name="Watahiki A."/>
            <person name="Okamura-Oho Y."/>
            <person name="Suzuki H."/>
            <person name="Kawai J."/>
            <person name="Hayashizaki Y."/>
        </authorList>
    </citation>
    <scope>NUCLEOTIDE SEQUENCE [LARGE SCALE MRNA]</scope>
    <source>
        <strain>C57BL/6J</strain>
    </source>
</reference>
<reference key="3">
    <citation type="journal article" date="2004" name="Genome Res.">
        <title>The status, quality, and expansion of the NIH full-length cDNA project: the Mammalian Gene Collection (MGC).</title>
        <authorList>
            <consortium name="The MGC Project Team"/>
        </authorList>
    </citation>
    <scope>NUCLEOTIDE SEQUENCE [LARGE SCALE MRNA]</scope>
    <source>
        <tissue>Brain</tissue>
        <tissue>Eye</tissue>
    </source>
</reference>
<reference key="4">
    <citation type="journal article" date="2004" name="Gene">
        <title>RJLs: a new family of Ras-related GTP-binding proteins.</title>
        <authorList>
            <person name="Nepomuceno-Silva J.L."/>
            <person name="de Melo L.D."/>
            <person name="Mendonca S.M."/>
            <person name="Paixao J.C."/>
            <person name="Lopes U.G."/>
        </authorList>
    </citation>
    <scope>IDENTIFICATION</scope>
</reference>
<reference key="5">
    <citation type="journal article" date="2010" name="Cell">
        <title>A tissue-specific atlas of mouse protein phosphorylation and expression.</title>
        <authorList>
            <person name="Huttlin E.L."/>
            <person name="Jedrychowski M.P."/>
            <person name="Elias J.E."/>
            <person name="Goswami T."/>
            <person name="Rad R."/>
            <person name="Beausoleil S.A."/>
            <person name="Villen J."/>
            <person name="Haas W."/>
            <person name="Sowa M.E."/>
            <person name="Gygi S.P."/>
        </authorList>
    </citation>
    <scope>IDENTIFICATION BY MASS SPECTROMETRY [LARGE SCALE ANALYSIS]</scope>
    <source>
        <tissue>Brain</tissue>
    </source>
</reference>
<reference key="6">
    <citation type="journal article" date="2014" name="Cancer Cell">
        <title>Small GTPase RBJ mediates nuclear entrapment of MEK1/MEK2 in tumor progression.</title>
        <authorList>
            <person name="Chen T."/>
            <person name="Yang M."/>
            <person name="Yu Z."/>
            <person name="Tang S."/>
            <person name="Wang C."/>
            <person name="Zhu X."/>
            <person name="Guo J."/>
            <person name="Li N."/>
            <person name="Zhang W."/>
            <person name="Hou J."/>
            <person name="Liu H."/>
            <person name="Han C."/>
            <person name="Liu Q."/>
            <person name="Gu Y."/>
            <person name="Qian C."/>
            <person name="Wan T."/>
            <person name="Cui L."/>
            <person name="Zhu M."/>
            <person name="Zheng W."/>
            <person name="Cao X."/>
        </authorList>
    </citation>
    <scope>FUNCTION</scope>
    <scope>SUBCELLULAR LOCATION</scope>
    <scope>INTERACTION WITH MAPK1 AND MAP2K1</scope>
    <scope>MUTAGENESIS OF SER-30 AND HIS-75</scope>
</reference>
<keyword id="KW-0342">GTP-binding</keyword>
<keyword id="KW-0547">Nucleotide-binding</keyword>
<keyword id="KW-0539">Nucleus</keyword>
<keyword id="KW-1185">Reference proteome</keyword>